<organism>
    <name type="scientific">Streptococcus pneumoniae (strain ATCC BAA-255 / R6)</name>
    <dbReference type="NCBI Taxonomy" id="171101"/>
    <lineage>
        <taxon>Bacteria</taxon>
        <taxon>Bacillati</taxon>
        <taxon>Bacillota</taxon>
        <taxon>Bacilli</taxon>
        <taxon>Lactobacillales</taxon>
        <taxon>Streptococcaceae</taxon>
        <taxon>Streptococcus</taxon>
    </lineage>
</organism>
<sequence>MKAIITVVGKDKSGIVAGVSGKIAELGLNIDDISQTVLDEYFTMMAVVSSDEKQDFTYLRNEFEAFGQTLNVKINIQSAAIFEAMYNI</sequence>
<name>Y217_STRR6</name>
<proteinExistence type="inferred from homology"/>
<protein>
    <recommendedName>
        <fullName evidence="1">UPF0237 protein spr0217</fullName>
    </recommendedName>
</protein>
<evidence type="ECO:0000255" key="1">
    <source>
        <dbReference type="HAMAP-Rule" id="MF_01054"/>
    </source>
</evidence>
<evidence type="ECO:0000305" key="2"/>
<comment type="subunit">
    <text evidence="1">Homodimer.</text>
</comment>
<comment type="similarity">
    <text evidence="1">Belongs to the UPF0237 family.</text>
</comment>
<comment type="sequence caution" evidence="2">
    <conflict type="erroneous initiation">
        <sequence resource="EMBL-CDS" id="AAK99021"/>
    </conflict>
</comment>
<accession>P67383</accession>
<accession>Q8DRD3</accession>
<accession>Q97ST5</accession>
<gene>
    <name type="ordered locus">spr0217</name>
</gene>
<reference key="1">
    <citation type="journal article" date="2001" name="J. Bacteriol.">
        <title>Genome of the bacterium Streptococcus pneumoniae strain R6.</title>
        <authorList>
            <person name="Hoskins J."/>
            <person name="Alborn W.E. Jr."/>
            <person name="Arnold J."/>
            <person name="Blaszczak L.C."/>
            <person name="Burgett S."/>
            <person name="DeHoff B.S."/>
            <person name="Estrem S.T."/>
            <person name="Fritz L."/>
            <person name="Fu D.-J."/>
            <person name="Fuller W."/>
            <person name="Geringer C."/>
            <person name="Gilmour R."/>
            <person name="Glass J.S."/>
            <person name="Khoja H."/>
            <person name="Kraft A.R."/>
            <person name="Lagace R.E."/>
            <person name="LeBlanc D.J."/>
            <person name="Lee L.N."/>
            <person name="Lefkowitz E.J."/>
            <person name="Lu J."/>
            <person name="Matsushima P."/>
            <person name="McAhren S.M."/>
            <person name="McHenney M."/>
            <person name="McLeaster K."/>
            <person name="Mundy C.W."/>
            <person name="Nicas T.I."/>
            <person name="Norris F.H."/>
            <person name="O'Gara M."/>
            <person name="Peery R.B."/>
            <person name="Robertson G.T."/>
            <person name="Rockey P."/>
            <person name="Sun P.-M."/>
            <person name="Winkler M.E."/>
            <person name="Yang Y."/>
            <person name="Young-Bellido M."/>
            <person name="Zhao G."/>
            <person name="Zook C.A."/>
            <person name="Baltz R.H."/>
            <person name="Jaskunas S.R."/>
            <person name="Rosteck P.R. Jr."/>
            <person name="Skatrud P.L."/>
            <person name="Glass J.I."/>
        </authorList>
    </citation>
    <scope>NUCLEOTIDE SEQUENCE [LARGE SCALE GENOMIC DNA]</scope>
    <source>
        <strain>ATCC BAA-255 / R6</strain>
    </source>
</reference>
<feature type="chain" id="PRO_0000219908" description="UPF0237 protein spr0217">
    <location>
        <begin position="1"/>
        <end position="88"/>
    </location>
</feature>
<feature type="domain" description="ACT" evidence="1">
    <location>
        <begin position="4"/>
        <end position="77"/>
    </location>
</feature>
<keyword id="KW-1185">Reference proteome</keyword>
<dbReference type="EMBL" id="AE007317">
    <property type="protein sequence ID" value="AAK99021.1"/>
    <property type="status" value="ALT_INIT"/>
    <property type="molecule type" value="Genomic_DNA"/>
</dbReference>
<dbReference type="PIR" id="A97899">
    <property type="entry name" value="A97899"/>
</dbReference>
<dbReference type="RefSeq" id="NP_357811.2">
    <property type="nucleotide sequence ID" value="NC_003098.1"/>
</dbReference>
<dbReference type="RefSeq" id="WP_000644124.1">
    <property type="nucleotide sequence ID" value="NC_003098.1"/>
</dbReference>
<dbReference type="SMR" id="P67383"/>
<dbReference type="STRING" id="171101.spr0217"/>
<dbReference type="KEGG" id="spr:spr0217"/>
<dbReference type="PATRIC" id="fig|171101.6.peg.249"/>
<dbReference type="eggNOG" id="COG3830">
    <property type="taxonomic scope" value="Bacteria"/>
</dbReference>
<dbReference type="HOGENOM" id="CLU_155669_2_0_9"/>
<dbReference type="Proteomes" id="UP000000586">
    <property type="component" value="Chromosome"/>
</dbReference>
<dbReference type="CDD" id="cd04872">
    <property type="entry name" value="ACT_1ZPV"/>
    <property type="match status" value="1"/>
</dbReference>
<dbReference type="FunFam" id="3.30.70.260:FF:000032">
    <property type="entry name" value="UPF0237 protein SP_0238"/>
    <property type="match status" value="1"/>
</dbReference>
<dbReference type="Gene3D" id="3.30.70.260">
    <property type="match status" value="1"/>
</dbReference>
<dbReference type="HAMAP" id="MF_01054">
    <property type="entry name" value="UPF0237"/>
    <property type="match status" value="1"/>
</dbReference>
<dbReference type="InterPro" id="IPR045865">
    <property type="entry name" value="ACT-like_dom_sf"/>
</dbReference>
<dbReference type="InterPro" id="IPR002912">
    <property type="entry name" value="ACT_dom"/>
</dbReference>
<dbReference type="InterPro" id="IPR050990">
    <property type="entry name" value="UPF0237/GcvR_regulator"/>
</dbReference>
<dbReference type="InterPro" id="IPR022986">
    <property type="entry name" value="UPF0237_ACT"/>
</dbReference>
<dbReference type="NCBIfam" id="NF001220">
    <property type="entry name" value="PRK00194.1"/>
    <property type="match status" value="1"/>
</dbReference>
<dbReference type="PANTHER" id="PTHR34875">
    <property type="entry name" value="UPF0237 PROTEIN MJ1558"/>
    <property type="match status" value="1"/>
</dbReference>
<dbReference type="PANTHER" id="PTHR34875:SF6">
    <property type="entry name" value="UPF0237 PROTEIN MJ1558"/>
    <property type="match status" value="1"/>
</dbReference>
<dbReference type="Pfam" id="PF13740">
    <property type="entry name" value="ACT_6"/>
    <property type="match status" value="1"/>
</dbReference>
<dbReference type="SUPFAM" id="SSF55021">
    <property type="entry name" value="ACT-like"/>
    <property type="match status" value="1"/>
</dbReference>
<dbReference type="PROSITE" id="PS51671">
    <property type="entry name" value="ACT"/>
    <property type="match status" value="1"/>
</dbReference>